<accession>Q9W757</accession>
<keyword id="KW-0963">Cytoplasm</keyword>
<keyword id="KW-0238">DNA-binding</keyword>
<keyword id="KW-0539">Nucleus</keyword>
<keyword id="KW-1185">Reference proteome</keyword>
<keyword id="KW-0804">Transcription</keyword>
<keyword id="KW-0805">Transcription regulation</keyword>
<gene>
    <name type="primary">SOX10</name>
</gene>
<name>SOX10_CHICK</name>
<protein>
    <recommendedName>
        <fullName>Transcription factor SOX-10</fullName>
        <shortName>cSOX10</shortName>
    </recommendedName>
</protein>
<sequence>MADDQDLSEVEMSPVGSEDHHCLSPGPSMASDNSSHLASSGNGEMGKVKKEQQDSEADDDKFPVCIREAVSQVLSGYDWTLVPMPVRVNGSNKSKPHVKRPMNAFMVWAQAARRKLADQYPHLHNAELSKTLGKLWRLLNESDKRPFIEEAERLRMQHKKDHPDYKYQPRRRKNGKATQGEGEGQVEGEAGGAASIQAHYKNAHLDHRHPGEGSPMSDGHPEHSSGQSHGPPTPPTTPKTELQAGKADSKREGRSLGEGGKPHIDFGNVDIGEISHEVMSNMETFDVNEFDQYLPPNGHAGHPGHVGGYAAAAGYGLGSALAAASGHSAWISKQHGVSLSATTSPVVDSKAQVKTEGSAPGGHYTDQPSTSQIAYTSLSLPHYGSAFPSISRPQFDYPDHQPSGPYYSHSSQASGLYSAFSYMGPSQRPLYTAISDPAPSVPQSHSPTHWEQPVYTTLSRP</sequence>
<feature type="chain" id="PRO_0000048749" description="Transcription factor SOX-10">
    <location>
        <begin position="1"/>
        <end position="461"/>
    </location>
</feature>
<feature type="DNA-binding region" description="HMG box" evidence="4">
    <location>
        <begin position="98"/>
        <end position="166"/>
    </location>
</feature>
<feature type="region of interest" description="Disordered" evidence="5">
    <location>
        <begin position="1"/>
        <end position="60"/>
    </location>
</feature>
<feature type="region of interest" description="Dimerization (DIM)" evidence="2">
    <location>
        <begin position="56"/>
        <end position="96"/>
    </location>
</feature>
<feature type="region of interest" description="Disordered" evidence="5">
    <location>
        <begin position="154"/>
        <end position="191"/>
    </location>
</feature>
<feature type="region of interest" description="Disordered" evidence="5">
    <location>
        <begin position="205"/>
        <end position="268"/>
    </location>
</feature>
<feature type="region of interest" description="Transactivation domain (TAM)" evidence="2">
    <location>
        <begin position="221"/>
        <end position="306"/>
    </location>
</feature>
<feature type="region of interest" description="Transactivation domain (TAC)" evidence="2">
    <location>
        <begin position="350"/>
        <end position="461"/>
    </location>
</feature>
<feature type="region of interest" description="Disordered" evidence="5">
    <location>
        <begin position="350"/>
        <end position="369"/>
    </location>
</feature>
<feature type="region of interest" description="Disordered" evidence="5">
    <location>
        <begin position="433"/>
        <end position="461"/>
    </location>
</feature>
<feature type="compositionally biased region" description="Polar residues" evidence="5">
    <location>
        <begin position="30"/>
        <end position="42"/>
    </location>
</feature>
<feature type="compositionally biased region" description="Basic and acidic residues" evidence="5">
    <location>
        <begin position="154"/>
        <end position="167"/>
    </location>
</feature>
<feature type="compositionally biased region" description="Gly residues" evidence="5">
    <location>
        <begin position="181"/>
        <end position="191"/>
    </location>
</feature>
<feature type="compositionally biased region" description="Basic and acidic residues" evidence="5">
    <location>
        <begin position="247"/>
        <end position="264"/>
    </location>
</feature>
<feature type="compositionally biased region" description="Polar residues" evidence="5">
    <location>
        <begin position="441"/>
        <end position="461"/>
    </location>
</feature>
<proteinExistence type="evidence at transcript level"/>
<evidence type="ECO:0000250" key="1">
    <source>
        <dbReference type="UniProtKB" id="P48436"/>
    </source>
</evidence>
<evidence type="ECO:0000250" key="2">
    <source>
        <dbReference type="UniProtKB" id="P56693"/>
    </source>
</evidence>
<evidence type="ECO:0000250" key="3">
    <source>
        <dbReference type="UniProtKB" id="Q04888"/>
    </source>
</evidence>
<evidence type="ECO:0000255" key="4">
    <source>
        <dbReference type="PROSITE-ProRule" id="PRU00267"/>
    </source>
</evidence>
<evidence type="ECO:0000256" key="5">
    <source>
        <dbReference type="SAM" id="MobiDB-lite"/>
    </source>
</evidence>
<comment type="function">
    <text evidence="3">Transcription factor that plays a central role in developing and mature glia. Specifically activates expression of myelin genes, during oligodendrocyte (OL) maturation, thereby playing a central role in oligodendrocyte maturation and CNS myelination.</text>
</comment>
<comment type="subcellular location">
    <subcellularLocation>
        <location evidence="2">Cytoplasm</location>
    </subcellularLocation>
    <subcellularLocation>
        <location evidence="2">Nucleus</location>
    </subcellularLocation>
</comment>
<comment type="domain">
    <text evidence="1">The transactivation domains TAM and TAC (for transactivation domain in the middle and at the C-terminus, respectively) are required to contact transcriptional coactivators and basal transcriptional machinery components and thereby induce gene transactivation.</text>
</comment>
<organism>
    <name type="scientific">Gallus gallus</name>
    <name type="common">Chicken</name>
    <dbReference type="NCBI Taxonomy" id="9031"/>
    <lineage>
        <taxon>Eukaryota</taxon>
        <taxon>Metazoa</taxon>
        <taxon>Chordata</taxon>
        <taxon>Craniata</taxon>
        <taxon>Vertebrata</taxon>
        <taxon>Euteleostomi</taxon>
        <taxon>Archelosauria</taxon>
        <taxon>Archosauria</taxon>
        <taxon>Dinosauria</taxon>
        <taxon>Saurischia</taxon>
        <taxon>Theropoda</taxon>
        <taxon>Coelurosauria</taxon>
        <taxon>Aves</taxon>
        <taxon>Neognathae</taxon>
        <taxon>Galloanserae</taxon>
        <taxon>Galliformes</taxon>
        <taxon>Phasianidae</taxon>
        <taxon>Phasianinae</taxon>
        <taxon>Gallus</taxon>
    </lineage>
</organism>
<reference key="1">
    <citation type="submission" date="2000-01" db="EMBL/GenBank/DDBJ databases">
        <title>Cloning and expression pattern of chick cSox10.</title>
        <authorList>
            <person name="Cheng Y.-C."/>
            <person name="Cheung M."/>
            <person name="Abu-Elmagd M."/>
            <person name="Orme T.A."/>
            <person name="Scotting P.J."/>
        </authorList>
    </citation>
    <scope>NUCLEOTIDE SEQUENCE [MRNA]</scope>
</reference>
<reference key="2">
    <citation type="journal article" date="1999" name="Neuron">
        <title>Bone morphogenetic proteins are required in vivo for the generation of sympathetic neurons.</title>
        <authorList>
            <person name="Schneider C."/>
            <person name="Wicht H."/>
            <person name="Enderich J."/>
            <person name="Wegner M."/>
            <person name="Rohrer H."/>
        </authorList>
    </citation>
    <scope>NUCLEOTIDE SEQUENCE [MRNA]</scope>
</reference>
<dbReference type="EMBL" id="AF152356">
    <property type="protein sequence ID" value="AAD38050.2"/>
    <property type="molecule type" value="mRNA"/>
</dbReference>
<dbReference type="EMBL" id="AJ245601">
    <property type="protein sequence ID" value="CAB65026.1"/>
    <property type="molecule type" value="mRNA"/>
</dbReference>
<dbReference type="RefSeq" id="NP_990123.1">
    <property type="nucleotide sequence ID" value="NM_204792.2"/>
</dbReference>
<dbReference type="SMR" id="Q9W757"/>
<dbReference type="STRING" id="9031.ENSGALP00000020056"/>
<dbReference type="PaxDb" id="9031-ENSGALP00000020056"/>
<dbReference type="GeneID" id="395573"/>
<dbReference type="KEGG" id="gga:395573"/>
<dbReference type="CTD" id="6663"/>
<dbReference type="VEuPathDB" id="HostDB:geneid_395573"/>
<dbReference type="eggNOG" id="KOG0527">
    <property type="taxonomic scope" value="Eukaryota"/>
</dbReference>
<dbReference type="HOGENOM" id="CLU_031800_0_0_1"/>
<dbReference type="InParanoid" id="Q9W757"/>
<dbReference type="OrthoDB" id="6247875at2759"/>
<dbReference type="PhylomeDB" id="Q9W757"/>
<dbReference type="Reactome" id="R-GGA-9856649">
    <property type="pathway name" value="Transcriptional and post-translational regulation of MITF-M expression and activity"/>
</dbReference>
<dbReference type="PRO" id="PR:Q9W757"/>
<dbReference type="Proteomes" id="UP000000539">
    <property type="component" value="Chromosome 1"/>
</dbReference>
<dbReference type="Bgee" id="ENSGALG00000012290">
    <property type="expression patterns" value="Expressed in cerebellum and 3 other cell types or tissues"/>
</dbReference>
<dbReference type="GO" id="GO:0005737">
    <property type="term" value="C:cytoplasm"/>
    <property type="evidence" value="ECO:0007669"/>
    <property type="project" value="UniProtKB-SubCell"/>
</dbReference>
<dbReference type="GO" id="GO:0005634">
    <property type="term" value="C:nucleus"/>
    <property type="evidence" value="ECO:0000318"/>
    <property type="project" value="GO_Central"/>
</dbReference>
<dbReference type="GO" id="GO:0003677">
    <property type="term" value="F:DNA binding"/>
    <property type="evidence" value="ECO:0000250"/>
    <property type="project" value="UniProtKB"/>
</dbReference>
<dbReference type="GO" id="GO:0003700">
    <property type="term" value="F:DNA-binding transcription factor activity"/>
    <property type="evidence" value="ECO:0000250"/>
    <property type="project" value="UniProtKB"/>
</dbReference>
<dbReference type="GO" id="GO:0000981">
    <property type="term" value="F:DNA-binding transcription factor activity, RNA polymerase II-specific"/>
    <property type="evidence" value="ECO:0000318"/>
    <property type="project" value="GO_Central"/>
</dbReference>
<dbReference type="GO" id="GO:0000978">
    <property type="term" value="F:RNA polymerase II cis-regulatory region sequence-specific DNA binding"/>
    <property type="evidence" value="ECO:0000318"/>
    <property type="project" value="GO_Central"/>
</dbReference>
<dbReference type="GO" id="GO:0060959">
    <property type="term" value="P:cardiac neuron development"/>
    <property type="evidence" value="ECO:0000270"/>
    <property type="project" value="UniProtKB"/>
</dbReference>
<dbReference type="GO" id="GO:0022010">
    <property type="term" value="P:central nervous system myelination"/>
    <property type="evidence" value="ECO:0000250"/>
    <property type="project" value="UniProtKB"/>
</dbReference>
<dbReference type="GO" id="GO:0048484">
    <property type="term" value="P:enteric nervous system development"/>
    <property type="evidence" value="ECO:0000318"/>
    <property type="project" value="GO_Central"/>
</dbReference>
<dbReference type="GO" id="GO:0002009">
    <property type="term" value="P:morphogenesis of an epithelium"/>
    <property type="evidence" value="ECO:0000318"/>
    <property type="project" value="GO_Central"/>
</dbReference>
<dbReference type="GO" id="GO:0000122">
    <property type="term" value="P:negative regulation of transcription by RNA polymerase II"/>
    <property type="evidence" value="ECO:0000318"/>
    <property type="project" value="GO_Central"/>
</dbReference>
<dbReference type="GO" id="GO:0001755">
    <property type="term" value="P:neural crest cell migration"/>
    <property type="evidence" value="ECO:0000318"/>
    <property type="project" value="GO_Central"/>
</dbReference>
<dbReference type="GO" id="GO:0014003">
    <property type="term" value="P:oligodendrocyte development"/>
    <property type="evidence" value="ECO:0000250"/>
    <property type="project" value="UniProtKB"/>
</dbReference>
<dbReference type="GO" id="GO:0048709">
    <property type="term" value="P:oligodendrocyte differentiation"/>
    <property type="evidence" value="ECO:0000250"/>
    <property type="project" value="UniProtKB"/>
</dbReference>
<dbReference type="GO" id="GO:0007422">
    <property type="term" value="P:peripheral nervous system development"/>
    <property type="evidence" value="ECO:0000318"/>
    <property type="project" value="GO_Central"/>
</dbReference>
<dbReference type="GO" id="GO:0045893">
    <property type="term" value="P:positive regulation of DNA-templated transcription"/>
    <property type="evidence" value="ECO:0000250"/>
    <property type="project" value="UniProtKB"/>
</dbReference>
<dbReference type="CDD" id="cd22031">
    <property type="entry name" value="HMG-box_SoxE"/>
    <property type="match status" value="1"/>
</dbReference>
<dbReference type="FunFam" id="1.10.30.10:FF:000004">
    <property type="entry name" value="Transcription factor SOX-10"/>
    <property type="match status" value="1"/>
</dbReference>
<dbReference type="Gene3D" id="1.10.30.10">
    <property type="entry name" value="High mobility group box domain"/>
    <property type="match status" value="1"/>
</dbReference>
<dbReference type="InterPro" id="IPR009071">
    <property type="entry name" value="HMG_box_dom"/>
</dbReference>
<dbReference type="InterPro" id="IPR036910">
    <property type="entry name" value="HMG_box_dom_sf"/>
</dbReference>
<dbReference type="InterPro" id="IPR022151">
    <property type="entry name" value="Sox_N"/>
</dbReference>
<dbReference type="InterPro" id="IPR050917">
    <property type="entry name" value="SOX_TF"/>
</dbReference>
<dbReference type="PANTHER" id="PTHR45803">
    <property type="entry name" value="SOX100B"/>
    <property type="match status" value="1"/>
</dbReference>
<dbReference type="PANTHER" id="PTHR45803:SF6">
    <property type="entry name" value="TRANSCRIPTION FACTOR SOX-10"/>
    <property type="match status" value="1"/>
</dbReference>
<dbReference type="Pfam" id="PF00505">
    <property type="entry name" value="HMG_box"/>
    <property type="match status" value="1"/>
</dbReference>
<dbReference type="Pfam" id="PF12444">
    <property type="entry name" value="Sox_N"/>
    <property type="match status" value="1"/>
</dbReference>
<dbReference type="SMART" id="SM00398">
    <property type="entry name" value="HMG"/>
    <property type="match status" value="1"/>
</dbReference>
<dbReference type="SUPFAM" id="SSF47095">
    <property type="entry name" value="HMG-box"/>
    <property type="match status" value="1"/>
</dbReference>
<dbReference type="PROSITE" id="PS50118">
    <property type="entry name" value="HMG_BOX_2"/>
    <property type="match status" value="1"/>
</dbReference>